<accession>P0A0G2</accession>
<accession>O06444</accession>
<accession>Q2FW24</accession>
<sequence>MAKLQITLTRSVIGRPETQRKTVEALGLKKTNSSVVVEDNPAIRGQINKVKHLVTVEEK</sequence>
<gene>
    <name evidence="1" type="primary">rpmD</name>
    <name type="ordered locus">SAOUHSC_02493</name>
</gene>
<comment type="subunit">
    <text evidence="1">Part of the 50S ribosomal subunit.</text>
</comment>
<comment type="similarity">
    <text evidence="1">Belongs to the universal ribosomal protein uL30 family.</text>
</comment>
<dbReference type="EMBL" id="U96620">
    <property type="protein sequence ID" value="AAB54020.1"/>
    <property type="molecule type" value="Genomic_DNA"/>
</dbReference>
<dbReference type="EMBL" id="CP000253">
    <property type="protein sequence ID" value="ABD31512.1"/>
    <property type="molecule type" value="Genomic_DNA"/>
</dbReference>
<dbReference type="RefSeq" id="WP_001096577.1">
    <property type="nucleotide sequence ID" value="NZ_LS483365.1"/>
</dbReference>
<dbReference type="RefSeq" id="YP_500961.1">
    <property type="nucleotide sequence ID" value="NC_007795.1"/>
</dbReference>
<dbReference type="PDB" id="4WCE">
    <property type="method" value="X-ray"/>
    <property type="resolution" value="3.53 A"/>
    <property type="chains" value="W=1-59"/>
</dbReference>
<dbReference type="PDB" id="4WF9">
    <property type="method" value="X-ray"/>
    <property type="resolution" value="3.43 A"/>
    <property type="chains" value="W=1-59"/>
</dbReference>
<dbReference type="PDB" id="4WFA">
    <property type="method" value="X-ray"/>
    <property type="resolution" value="3.39 A"/>
    <property type="chains" value="W=1-59"/>
</dbReference>
<dbReference type="PDB" id="4WFB">
    <property type="method" value="X-ray"/>
    <property type="resolution" value="3.43 A"/>
    <property type="chains" value="W=1-59"/>
</dbReference>
<dbReference type="PDB" id="5HKV">
    <property type="method" value="X-ray"/>
    <property type="resolution" value="3.66 A"/>
    <property type="chains" value="W=1-59"/>
</dbReference>
<dbReference type="PDB" id="5HL7">
    <property type="method" value="X-ray"/>
    <property type="resolution" value="3.55 A"/>
    <property type="chains" value="W=1-59"/>
</dbReference>
<dbReference type="PDB" id="5LI0">
    <property type="method" value="EM"/>
    <property type="resolution" value="3.80 A"/>
    <property type="chains" value="2=2-58"/>
</dbReference>
<dbReference type="PDB" id="5ND8">
    <property type="method" value="EM"/>
    <property type="resolution" value="3.70 A"/>
    <property type="chains" value="2=1-59"/>
</dbReference>
<dbReference type="PDB" id="5ND9">
    <property type="method" value="EM"/>
    <property type="resolution" value="3.70 A"/>
    <property type="chains" value="2=1-59"/>
</dbReference>
<dbReference type="PDB" id="5NRG">
    <property type="method" value="X-ray"/>
    <property type="resolution" value="3.44 A"/>
    <property type="chains" value="W=1-59"/>
</dbReference>
<dbReference type="PDB" id="5TCU">
    <property type="method" value="EM"/>
    <property type="resolution" value="3.90 A"/>
    <property type="chains" value="LD=2-58"/>
</dbReference>
<dbReference type="PDB" id="6DDD">
    <property type="method" value="EM"/>
    <property type="resolution" value="3.10 A"/>
    <property type="chains" value="M=1-59"/>
</dbReference>
<dbReference type="PDB" id="6DDG">
    <property type="method" value="EM"/>
    <property type="resolution" value="3.10 A"/>
    <property type="chains" value="M=1-59"/>
</dbReference>
<dbReference type="PDB" id="6HMA">
    <property type="method" value="EM"/>
    <property type="resolution" value="2.65 A"/>
    <property type="chains" value="X=2-59"/>
</dbReference>
<dbReference type="PDB" id="6SJ6">
    <property type="method" value="EM"/>
    <property type="resolution" value="3.23 A"/>
    <property type="chains" value="2=1-59"/>
</dbReference>
<dbReference type="PDB" id="6WQN">
    <property type="method" value="EM"/>
    <property type="resolution" value="2.90 A"/>
    <property type="chains" value="M=2-59"/>
</dbReference>
<dbReference type="PDB" id="6WQQ">
    <property type="method" value="EM"/>
    <property type="resolution" value="3.10 A"/>
    <property type="chains" value="M=2-59"/>
</dbReference>
<dbReference type="PDB" id="6WRS">
    <property type="method" value="EM"/>
    <property type="resolution" value="3.20 A"/>
    <property type="chains" value="M=2-59"/>
</dbReference>
<dbReference type="PDB" id="6WRU">
    <property type="method" value="EM"/>
    <property type="resolution" value="3.10 A"/>
    <property type="chains" value="M=2-59"/>
</dbReference>
<dbReference type="PDB" id="6YEF">
    <property type="method" value="EM"/>
    <property type="resolution" value="3.20 A"/>
    <property type="chains" value="2=1-59"/>
</dbReference>
<dbReference type="PDB" id="7ASM">
    <property type="method" value="EM"/>
    <property type="resolution" value="2.48 A"/>
    <property type="chains" value="X=2-59"/>
</dbReference>
<dbReference type="PDB" id="7ASN">
    <property type="method" value="EM"/>
    <property type="resolution" value="2.73 A"/>
    <property type="chains" value="X=2-59"/>
</dbReference>
<dbReference type="PDB" id="7NHL">
    <property type="method" value="EM"/>
    <property type="resolution" value="3.10 A"/>
    <property type="chains" value="3=1-59"/>
</dbReference>
<dbReference type="PDB" id="7NHM">
    <property type="method" value="EM"/>
    <property type="resolution" value="3.10 A"/>
    <property type="chains" value="3=1-59"/>
</dbReference>
<dbReference type="PDB" id="7TTU">
    <property type="method" value="EM"/>
    <property type="resolution" value="3.00 A"/>
    <property type="chains" value="M=1-59"/>
</dbReference>
<dbReference type="PDB" id="7TTW">
    <property type="method" value="EM"/>
    <property type="resolution" value="2.90 A"/>
    <property type="chains" value="M=1-59"/>
</dbReference>
<dbReference type="PDB" id="8P2F">
    <property type="method" value="EM"/>
    <property type="resolution" value="2.44 A"/>
    <property type="chains" value="3=1-59"/>
</dbReference>
<dbReference type="PDB" id="8P2G">
    <property type="method" value="EM"/>
    <property type="resolution" value="2.02 A"/>
    <property type="chains" value="3=1-59"/>
</dbReference>
<dbReference type="PDB" id="8P2H">
    <property type="method" value="EM"/>
    <property type="resolution" value="2.49 A"/>
    <property type="chains" value="3=1-59"/>
</dbReference>
<dbReference type="PDBsum" id="4WCE"/>
<dbReference type="PDBsum" id="4WF9"/>
<dbReference type="PDBsum" id="4WFA"/>
<dbReference type="PDBsum" id="4WFB"/>
<dbReference type="PDBsum" id="5HKV"/>
<dbReference type="PDBsum" id="5HL7"/>
<dbReference type="PDBsum" id="5LI0"/>
<dbReference type="PDBsum" id="5ND8"/>
<dbReference type="PDBsum" id="5ND9"/>
<dbReference type="PDBsum" id="5NRG"/>
<dbReference type="PDBsum" id="5TCU"/>
<dbReference type="PDBsum" id="6DDD"/>
<dbReference type="PDBsum" id="6DDG"/>
<dbReference type="PDBsum" id="6HMA"/>
<dbReference type="PDBsum" id="6SJ6"/>
<dbReference type="PDBsum" id="6WQN"/>
<dbReference type="PDBsum" id="6WQQ"/>
<dbReference type="PDBsum" id="6WRS"/>
<dbReference type="PDBsum" id="6WRU"/>
<dbReference type="PDBsum" id="6YEF"/>
<dbReference type="PDBsum" id="7ASM"/>
<dbReference type="PDBsum" id="7ASN"/>
<dbReference type="PDBsum" id="7NHL"/>
<dbReference type="PDBsum" id="7NHM"/>
<dbReference type="PDBsum" id="7TTU"/>
<dbReference type="PDBsum" id="7TTW"/>
<dbReference type="PDBsum" id="8P2F"/>
<dbReference type="PDBsum" id="8P2G"/>
<dbReference type="PDBsum" id="8P2H"/>
<dbReference type="EMDB" id="EMD-10212"/>
<dbReference type="EMDB" id="EMD-10791"/>
<dbReference type="EMDB" id="EMD-12332"/>
<dbReference type="EMDB" id="EMD-12333"/>
<dbReference type="EMDB" id="EMD-17363"/>
<dbReference type="EMDB" id="EMD-17364"/>
<dbReference type="EMDB" id="EMD-17365"/>
<dbReference type="EMDB" id="EMD-3624"/>
<dbReference type="EMDB" id="EMD-3625"/>
<dbReference type="EMDB" id="EMD-4050"/>
<dbReference type="EMDB" id="EMD-8402"/>
<dbReference type="SMR" id="P0A0G2"/>
<dbReference type="IntAct" id="P0A0G2">
    <property type="interactions" value="1"/>
</dbReference>
<dbReference type="STRING" id="93061.SAOUHSC_02493"/>
<dbReference type="PaxDb" id="1280-SAXN108_2482"/>
<dbReference type="GeneID" id="3920870"/>
<dbReference type="KEGG" id="sao:SAOUHSC_02493"/>
<dbReference type="PATRIC" id="fig|93061.5.peg.2249"/>
<dbReference type="eggNOG" id="COG1841">
    <property type="taxonomic scope" value="Bacteria"/>
</dbReference>
<dbReference type="HOGENOM" id="CLU_131047_2_1_9"/>
<dbReference type="OrthoDB" id="9812790at2"/>
<dbReference type="EvolutionaryTrace" id="P0A0G2"/>
<dbReference type="PRO" id="PR:P0A0G2"/>
<dbReference type="Proteomes" id="UP000008816">
    <property type="component" value="Chromosome"/>
</dbReference>
<dbReference type="GO" id="GO:0022625">
    <property type="term" value="C:cytosolic large ribosomal subunit"/>
    <property type="evidence" value="ECO:0000318"/>
    <property type="project" value="GO_Central"/>
</dbReference>
<dbReference type="GO" id="GO:0003735">
    <property type="term" value="F:structural constituent of ribosome"/>
    <property type="evidence" value="ECO:0007669"/>
    <property type="project" value="InterPro"/>
</dbReference>
<dbReference type="GO" id="GO:0006412">
    <property type="term" value="P:translation"/>
    <property type="evidence" value="ECO:0007669"/>
    <property type="project" value="UniProtKB-UniRule"/>
</dbReference>
<dbReference type="CDD" id="cd01658">
    <property type="entry name" value="Ribosomal_L30"/>
    <property type="match status" value="1"/>
</dbReference>
<dbReference type="FunFam" id="3.30.1390.20:FF:000001">
    <property type="entry name" value="50S ribosomal protein L30"/>
    <property type="match status" value="1"/>
</dbReference>
<dbReference type="Gene3D" id="3.30.1390.20">
    <property type="entry name" value="Ribosomal protein L30, ferredoxin-like fold domain"/>
    <property type="match status" value="1"/>
</dbReference>
<dbReference type="HAMAP" id="MF_01371_B">
    <property type="entry name" value="Ribosomal_uL30_B"/>
    <property type="match status" value="1"/>
</dbReference>
<dbReference type="InterPro" id="IPR036919">
    <property type="entry name" value="Ribo_uL30_ferredoxin-like_sf"/>
</dbReference>
<dbReference type="InterPro" id="IPR005996">
    <property type="entry name" value="Ribosomal_uL30_bac-type"/>
</dbReference>
<dbReference type="InterPro" id="IPR016082">
    <property type="entry name" value="Ribosomal_uL30_ferredoxin-like"/>
</dbReference>
<dbReference type="NCBIfam" id="TIGR01308">
    <property type="entry name" value="rpmD_bact"/>
    <property type="match status" value="1"/>
</dbReference>
<dbReference type="PANTHER" id="PTHR15892:SF2">
    <property type="entry name" value="LARGE RIBOSOMAL SUBUNIT PROTEIN UL30M"/>
    <property type="match status" value="1"/>
</dbReference>
<dbReference type="PANTHER" id="PTHR15892">
    <property type="entry name" value="MITOCHONDRIAL RIBOSOMAL PROTEIN L30"/>
    <property type="match status" value="1"/>
</dbReference>
<dbReference type="Pfam" id="PF00327">
    <property type="entry name" value="Ribosomal_L30"/>
    <property type="match status" value="1"/>
</dbReference>
<dbReference type="PIRSF" id="PIRSF002211">
    <property type="entry name" value="Ribosomal_L30_bac-type"/>
    <property type="match status" value="1"/>
</dbReference>
<dbReference type="SUPFAM" id="SSF55129">
    <property type="entry name" value="Ribosomal protein L30p/L7e"/>
    <property type="match status" value="1"/>
</dbReference>
<evidence type="ECO:0000255" key="1">
    <source>
        <dbReference type="HAMAP-Rule" id="MF_01371"/>
    </source>
</evidence>
<evidence type="ECO:0000305" key="2"/>
<evidence type="ECO:0007829" key="3">
    <source>
        <dbReference type="PDB" id="6DDD"/>
    </source>
</evidence>
<evidence type="ECO:0007829" key="4">
    <source>
        <dbReference type="PDB" id="6SJ6"/>
    </source>
</evidence>
<evidence type="ECO:0007829" key="5">
    <source>
        <dbReference type="PDB" id="7ASM"/>
    </source>
</evidence>
<reference key="1">
    <citation type="submission" date="1997-04" db="EMBL/GenBank/DDBJ databases">
        <authorList>
            <person name="Segarra R.A."/>
            <person name="Iandolo J.J."/>
        </authorList>
    </citation>
    <scope>NUCLEOTIDE SEQUENCE [GENOMIC DNA]</scope>
</reference>
<reference key="2">
    <citation type="book" date="2006" name="Gram positive pathogens, 2nd edition">
        <title>The Staphylococcus aureus NCTC 8325 genome.</title>
        <editorList>
            <person name="Fischetti V."/>
            <person name="Novick R."/>
            <person name="Ferretti J."/>
            <person name="Portnoy D."/>
            <person name="Rood J."/>
        </editorList>
        <authorList>
            <person name="Gillaspy A.F."/>
            <person name="Worrell V."/>
            <person name="Orvis J."/>
            <person name="Roe B.A."/>
            <person name="Dyer D.W."/>
            <person name="Iandolo J.J."/>
        </authorList>
    </citation>
    <scope>NUCLEOTIDE SEQUENCE [LARGE SCALE GENOMIC DNA]</scope>
    <source>
        <strain>NCTC 8325 / PS 47</strain>
    </source>
</reference>
<proteinExistence type="evidence at protein level"/>
<keyword id="KW-0002">3D-structure</keyword>
<keyword id="KW-1185">Reference proteome</keyword>
<keyword id="KW-0687">Ribonucleoprotein</keyword>
<keyword id="KW-0689">Ribosomal protein</keyword>
<feature type="chain" id="PRO_0000104611" description="Large ribosomal subunit protein uL30">
    <location>
        <begin position="1"/>
        <end position="59"/>
    </location>
</feature>
<feature type="strand" evidence="5">
    <location>
        <begin position="3"/>
        <end position="8"/>
    </location>
</feature>
<feature type="strand" evidence="3">
    <location>
        <begin position="13"/>
        <end position="15"/>
    </location>
</feature>
<feature type="helix" evidence="5">
    <location>
        <begin position="17"/>
        <end position="26"/>
    </location>
</feature>
<feature type="strand" evidence="4">
    <location>
        <begin position="30"/>
        <end position="32"/>
    </location>
</feature>
<feature type="strand" evidence="5">
    <location>
        <begin position="34"/>
        <end position="38"/>
    </location>
</feature>
<feature type="helix" evidence="5">
    <location>
        <begin position="41"/>
        <end position="49"/>
    </location>
</feature>
<feature type="turn" evidence="5">
    <location>
        <begin position="50"/>
        <end position="52"/>
    </location>
</feature>
<feature type="strand" evidence="5">
    <location>
        <begin position="53"/>
        <end position="57"/>
    </location>
</feature>
<name>RL30_STAA8</name>
<protein>
    <recommendedName>
        <fullName evidence="1">Large ribosomal subunit protein uL30</fullName>
    </recommendedName>
    <alternativeName>
        <fullName evidence="2">50S ribosomal protein L30</fullName>
    </alternativeName>
</protein>
<organism>
    <name type="scientific">Staphylococcus aureus (strain NCTC 8325 / PS 47)</name>
    <dbReference type="NCBI Taxonomy" id="93061"/>
    <lineage>
        <taxon>Bacteria</taxon>
        <taxon>Bacillati</taxon>
        <taxon>Bacillota</taxon>
        <taxon>Bacilli</taxon>
        <taxon>Bacillales</taxon>
        <taxon>Staphylococcaceae</taxon>
        <taxon>Staphylococcus</taxon>
    </lineage>
</organism>